<organism>
    <name type="scientific">Haemophilus influenzae (strain PittGG)</name>
    <dbReference type="NCBI Taxonomy" id="374931"/>
    <lineage>
        <taxon>Bacteria</taxon>
        <taxon>Pseudomonadati</taxon>
        <taxon>Pseudomonadota</taxon>
        <taxon>Gammaproteobacteria</taxon>
        <taxon>Pasteurellales</taxon>
        <taxon>Pasteurellaceae</taxon>
        <taxon>Haemophilus</taxon>
    </lineage>
</organism>
<comment type="function">
    <text evidence="1">Produces ATP from ADP in the presence of a proton gradient across the membrane. The gamma chain is believed to be important in regulating ATPase activity and the flow of protons through the CF(0) complex.</text>
</comment>
<comment type="subunit">
    <text evidence="1">F-type ATPases have 2 components, CF(1) - the catalytic core - and CF(0) - the membrane proton channel. CF(1) has five subunits: alpha(3), beta(3), gamma(1), delta(1), epsilon(1). CF(0) has three main subunits: a, b and c.</text>
</comment>
<comment type="subcellular location">
    <subcellularLocation>
        <location evidence="1">Cell inner membrane</location>
        <topology evidence="1">Peripheral membrane protein</topology>
    </subcellularLocation>
</comment>
<comment type="similarity">
    <text evidence="1">Belongs to the ATPase gamma chain family.</text>
</comment>
<feature type="chain" id="PRO_1000053222" description="ATP synthase gamma chain">
    <location>
        <begin position="1"/>
        <end position="289"/>
    </location>
</feature>
<name>ATPG_HAEIG</name>
<protein>
    <recommendedName>
        <fullName evidence="1">ATP synthase gamma chain</fullName>
    </recommendedName>
    <alternativeName>
        <fullName evidence="1">ATP synthase F1 sector gamma subunit</fullName>
    </alternativeName>
    <alternativeName>
        <fullName evidence="1">F-ATPase gamma subunit</fullName>
    </alternativeName>
</protein>
<accession>A5UGZ0</accession>
<evidence type="ECO:0000255" key="1">
    <source>
        <dbReference type="HAMAP-Rule" id="MF_00815"/>
    </source>
</evidence>
<keyword id="KW-0066">ATP synthesis</keyword>
<keyword id="KW-0997">Cell inner membrane</keyword>
<keyword id="KW-1003">Cell membrane</keyword>
<keyword id="KW-0139">CF(1)</keyword>
<keyword id="KW-0375">Hydrogen ion transport</keyword>
<keyword id="KW-0406">Ion transport</keyword>
<keyword id="KW-0472">Membrane</keyword>
<keyword id="KW-0813">Transport</keyword>
<gene>
    <name evidence="1" type="primary">atpG</name>
    <name type="ordered locus">CGSHiGG_05655</name>
</gene>
<dbReference type="EMBL" id="CP000672">
    <property type="protein sequence ID" value="ABR00046.1"/>
    <property type="molecule type" value="Genomic_DNA"/>
</dbReference>
<dbReference type="SMR" id="A5UGZ0"/>
<dbReference type="KEGG" id="hiq:CGSHiGG_05655"/>
<dbReference type="HOGENOM" id="CLU_050669_0_1_6"/>
<dbReference type="Proteomes" id="UP000001990">
    <property type="component" value="Chromosome"/>
</dbReference>
<dbReference type="GO" id="GO:0005886">
    <property type="term" value="C:plasma membrane"/>
    <property type="evidence" value="ECO:0007669"/>
    <property type="project" value="UniProtKB-SubCell"/>
</dbReference>
<dbReference type="GO" id="GO:0045259">
    <property type="term" value="C:proton-transporting ATP synthase complex"/>
    <property type="evidence" value="ECO:0007669"/>
    <property type="project" value="UniProtKB-KW"/>
</dbReference>
<dbReference type="GO" id="GO:0005524">
    <property type="term" value="F:ATP binding"/>
    <property type="evidence" value="ECO:0007669"/>
    <property type="project" value="UniProtKB-UniRule"/>
</dbReference>
<dbReference type="GO" id="GO:0046933">
    <property type="term" value="F:proton-transporting ATP synthase activity, rotational mechanism"/>
    <property type="evidence" value="ECO:0007669"/>
    <property type="project" value="UniProtKB-UniRule"/>
</dbReference>
<dbReference type="GO" id="GO:0042777">
    <property type="term" value="P:proton motive force-driven plasma membrane ATP synthesis"/>
    <property type="evidence" value="ECO:0007669"/>
    <property type="project" value="UniProtKB-UniRule"/>
</dbReference>
<dbReference type="CDD" id="cd12151">
    <property type="entry name" value="F1-ATPase_gamma"/>
    <property type="match status" value="1"/>
</dbReference>
<dbReference type="FunFam" id="1.10.287.80:FF:000005">
    <property type="entry name" value="ATP synthase gamma chain"/>
    <property type="match status" value="1"/>
</dbReference>
<dbReference type="FunFam" id="3.40.1380.10:FF:000001">
    <property type="entry name" value="ATP synthase gamma chain"/>
    <property type="match status" value="1"/>
</dbReference>
<dbReference type="Gene3D" id="3.40.1380.10">
    <property type="match status" value="1"/>
</dbReference>
<dbReference type="Gene3D" id="1.10.287.80">
    <property type="entry name" value="ATP synthase, gamma subunit, helix hairpin domain"/>
    <property type="match status" value="1"/>
</dbReference>
<dbReference type="HAMAP" id="MF_00815">
    <property type="entry name" value="ATP_synth_gamma_bact"/>
    <property type="match status" value="1"/>
</dbReference>
<dbReference type="InterPro" id="IPR035968">
    <property type="entry name" value="ATP_synth_F1_ATPase_gsu"/>
</dbReference>
<dbReference type="InterPro" id="IPR000131">
    <property type="entry name" value="ATP_synth_F1_gsu"/>
</dbReference>
<dbReference type="InterPro" id="IPR023632">
    <property type="entry name" value="ATP_synth_F1_gsu_CS"/>
</dbReference>
<dbReference type="NCBIfam" id="TIGR01146">
    <property type="entry name" value="ATPsyn_F1gamma"/>
    <property type="match status" value="1"/>
</dbReference>
<dbReference type="NCBIfam" id="NF004144">
    <property type="entry name" value="PRK05621.1-1"/>
    <property type="match status" value="1"/>
</dbReference>
<dbReference type="PANTHER" id="PTHR11693">
    <property type="entry name" value="ATP SYNTHASE GAMMA CHAIN"/>
    <property type="match status" value="1"/>
</dbReference>
<dbReference type="PANTHER" id="PTHR11693:SF22">
    <property type="entry name" value="ATP SYNTHASE SUBUNIT GAMMA, MITOCHONDRIAL"/>
    <property type="match status" value="1"/>
</dbReference>
<dbReference type="Pfam" id="PF00231">
    <property type="entry name" value="ATP-synt"/>
    <property type="match status" value="1"/>
</dbReference>
<dbReference type="PRINTS" id="PR00126">
    <property type="entry name" value="ATPASEGAMMA"/>
</dbReference>
<dbReference type="SUPFAM" id="SSF52943">
    <property type="entry name" value="ATP synthase (F1-ATPase), gamma subunit"/>
    <property type="match status" value="1"/>
</dbReference>
<dbReference type="PROSITE" id="PS00153">
    <property type="entry name" value="ATPASE_GAMMA"/>
    <property type="match status" value="1"/>
</dbReference>
<sequence length="289" mass="32125">MAGAKEIKTKIASVQSTQKITKAMEMVATSKMRKTQDRMAASRPYSETIRNVISHVSKASIGYKHPFLVEREVKKIGILVISTDRGMCGGLNVNLFKTILNQIKNWKEQNISTDLGLIGSKGISFFRSFGFNIKGQLSGLGDMPALEELIGVANTMFDAYRNGEIDAVYIAYNKFVNTMSQKPVVQQLVPLPESKDDHLNERQQTWDYLYEPEPKVLLDSLLVRYLESQIYQAVVDNLASEQAARMVAMKAATDNAGNLINDLRLVYNKARQASITNELNEIVAGAAAI</sequence>
<reference key="1">
    <citation type="journal article" date="2007" name="Genome Biol.">
        <title>Characterization and modeling of the Haemophilus influenzae core and supragenomes based on the complete genomic sequences of Rd and 12 clinical nontypeable strains.</title>
        <authorList>
            <person name="Hogg J.S."/>
            <person name="Hu F.Z."/>
            <person name="Janto B."/>
            <person name="Boissy R."/>
            <person name="Hayes J."/>
            <person name="Keefe R."/>
            <person name="Post J.C."/>
            <person name="Ehrlich G.D."/>
        </authorList>
    </citation>
    <scope>NUCLEOTIDE SEQUENCE [LARGE SCALE GENOMIC DNA]</scope>
    <source>
        <strain>PittGG</strain>
    </source>
</reference>
<proteinExistence type="inferred from homology"/>